<feature type="chain" id="PRO_1000114448" description="Small ribosomal subunit protein bS18">
    <location>
        <begin position="1"/>
        <end position="75"/>
    </location>
</feature>
<comment type="function">
    <text evidence="1">Binds as a heterodimer with protein bS6 to the central domain of the 16S rRNA, where it helps stabilize the platform of the 30S subunit.</text>
</comment>
<comment type="subunit">
    <text evidence="1">Part of the 30S ribosomal subunit. Forms a tight heterodimer with protein bS6.</text>
</comment>
<comment type="similarity">
    <text evidence="1">Belongs to the bacterial ribosomal protein bS18 family.</text>
</comment>
<name>RS18_SALNS</name>
<reference key="1">
    <citation type="journal article" date="2011" name="J. Bacteriol.">
        <title>Comparative genomics of 28 Salmonella enterica isolates: evidence for CRISPR-mediated adaptive sublineage evolution.</title>
        <authorList>
            <person name="Fricke W.F."/>
            <person name="Mammel M.K."/>
            <person name="McDermott P.F."/>
            <person name="Tartera C."/>
            <person name="White D.G."/>
            <person name="Leclerc J.E."/>
            <person name="Ravel J."/>
            <person name="Cebula T.A."/>
        </authorList>
    </citation>
    <scope>NUCLEOTIDE SEQUENCE [LARGE SCALE GENOMIC DNA]</scope>
    <source>
        <strain>SL254</strain>
    </source>
</reference>
<sequence>MARYFRRRKFCRFTAEGVQEIDYKDIATLKNYITESGKIVPSRITGTRAKYQRQLARAIKRARYLSLLPYTDRHQ</sequence>
<protein>
    <recommendedName>
        <fullName evidence="1">Small ribosomal subunit protein bS18</fullName>
    </recommendedName>
    <alternativeName>
        <fullName evidence="2">30S ribosomal protein S18</fullName>
    </alternativeName>
</protein>
<keyword id="KW-0687">Ribonucleoprotein</keyword>
<keyword id="KW-0689">Ribosomal protein</keyword>
<keyword id="KW-0694">RNA-binding</keyword>
<keyword id="KW-0699">rRNA-binding</keyword>
<evidence type="ECO:0000255" key="1">
    <source>
        <dbReference type="HAMAP-Rule" id="MF_00270"/>
    </source>
</evidence>
<evidence type="ECO:0000305" key="2"/>
<proteinExistence type="inferred from homology"/>
<dbReference type="EMBL" id="CP001113">
    <property type="protein sequence ID" value="ACF65692.1"/>
    <property type="molecule type" value="Genomic_DNA"/>
</dbReference>
<dbReference type="RefSeq" id="WP_000135199.1">
    <property type="nucleotide sequence ID" value="NZ_CCMR01000003.1"/>
</dbReference>
<dbReference type="SMR" id="B4T3F3"/>
<dbReference type="GeneID" id="98186237"/>
<dbReference type="KEGG" id="see:SNSL254_A4753"/>
<dbReference type="HOGENOM" id="CLU_148710_2_3_6"/>
<dbReference type="Proteomes" id="UP000008824">
    <property type="component" value="Chromosome"/>
</dbReference>
<dbReference type="GO" id="GO:0022627">
    <property type="term" value="C:cytosolic small ribosomal subunit"/>
    <property type="evidence" value="ECO:0007669"/>
    <property type="project" value="TreeGrafter"/>
</dbReference>
<dbReference type="GO" id="GO:0070181">
    <property type="term" value="F:small ribosomal subunit rRNA binding"/>
    <property type="evidence" value="ECO:0007669"/>
    <property type="project" value="TreeGrafter"/>
</dbReference>
<dbReference type="GO" id="GO:0003735">
    <property type="term" value="F:structural constituent of ribosome"/>
    <property type="evidence" value="ECO:0007669"/>
    <property type="project" value="InterPro"/>
</dbReference>
<dbReference type="GO" id="GO:0006412">
    <property type="term" value="P:translation"/>
    <property type="evidence" value="ECO:0007669"/>
    <property type="project" value="UniProtKB-UniRule"/>
</dbReference>
<dbReference type="FunFam" id="4.10.640.10:FF:000001">
    <property type="entry name" value="30S ribosomal protein S18"/>
    <property type="match status" value="1"/>
</dbReference>
<dbReference type="Gene3D" id="4.10.640.10">
    <property type="entry name" value="Ribosomal protein S18"/>
    <property type="match status" value="1"/>
</dbReference>
<dbReference type="HAMAP" id="MF_00270">
    <property type="entry name" value="Ribosomal_bS18"/>
    <property type="match status" value="1"/>
</dbReference>
<dbReference type="InterPro" id="IPR001648">
    <property type="entry name" value="Ribosomal_bS18"/>
</dbReference>
<dbReference type="InterPro" id="IPR018275">
    <property type="entry name" value="Ribosomal_bS18_CS"/>
</dbReference>
<dbReference type="InterPro" id="IPR036870">
    <property type="entry name" value="Ribosomal_bS18_sf"/>
</dbReference>
<dbReference type="NCBIfam" id="TIGR00165">
    <property type="entry name" value="S18"/>
    <property type="match status" value="1"/>
</dbReference>
<dbReference type="PANTHER" id="PTHR13479">
    <property type="entry name" value="30S RIBOSOMAL PROTEIN S18"/>
    <property type="match status" value="1"/>
</dbReference>
<dbReference type="PANTHER" id="PTHR13479:SF40">
    <property type="entry name" value="SMALL RIBOSOMAL SUBUNIT PROTEIN BS18M"/>
    <property type="match status" value="1"/>
</dbReference>
<dbReference type="Pfam" id="PF01084">
    <property type="entry name" value="Ribosomal_S18"/>
    <property type="match status" value="1"/>
</dbReference>
<dbReference type="PRINTS" id="PR00974">
    <property type="entry name" value="RIBOSOMALS18"/>
</dbReference>
<dbReference type="SUPFAM" id="SSF46911">
    <property type="entry name" value="Ribosomal protein S18"/>
    <property type="match status" value="1"/>
</dbReference>
<dbReference type="PROSITE" id="PS00057">
    <property type="entry name" value="RIBOSOMAL_S18"/>
    <property type="match status" value="1"/>
</dbReference>
<accession>B4T3F3</accession>
<organism>
    <name type="scientific">Salmonella newport (strain SL254)</name>
    <dbReference type="NCBI Taxonomy" id="423368"/>
    <lineage>
        <taxon>Bacteria</taxon>
        <taxon>Pseudomonadati</taxon>
        <taxon>Pseudomonadota</taxon>
        <taxon>Gammaproteobacteria</taxon>
        <taxon>Enterobacterales</taxon>
        <taxon>Enterobacteriaceae</taxon>
        <taxon>Salmonella</taxon>
    </lineage>
</organism>
<gene>
    <name evidence="1" type="primary">rpsR</name>
    <name type="ordered locus">SNSL254_A4753</name>
</gene>